<reference key="1">
    <citation type="journal article" date="2008" name="J. Bacteriol.">
        <title>The genome of Heliobacterium modesticaldum, a phototrophic representative of the Firmicutes containing the simplest photosynthetic apparatus.</title>
        <authorList>
            <person name="Sattley W.M."/>
            <person name="Madigan M.T."/>
            <person name="Swingley W.D."/>
            <person name="Cheung P.C."/>
            <person name="Clocksin K.M."/>
            <person name="Conrad A.L."/>
            <person name="Dejesa L.C."/>
            <person name="Honchak B.M."/>
            <person name="Jung D.O."/>
            <person name="Karbach L.E."/>
            <person name="Kurdoglu A."/>
            <person name="Lahiri S."/>
            <person name="Mastrian S.D."/>
            <person name="Page L.E."/>
            <person name="Taylor H.L."/>
            <person name="Wang Z.T."/>
            <person name="Raymond J."/>
            <person name="Chen M."/>
            <person name="Blankenship R.E."/>
            <person name="Touchman J.W."/>
        </authorList>
    </citation>
    <scope>NUCLEOTIDE SEQUENCE [LARGE SCALE GENOMIC DNA]</scope>
    <source>
        <strain>ATCC 51547 / Ice1</strain>
    </source>
</reference>
<gene>
    <name type="ordered locus">Helmi_09130</name>
    <name type="ORF">HM1_1036</name>
</gene>
<organism>
    <name type="scientific">Heliobacterium modesticaldum (strain ATCC 51547 / Ice1)</name>
    <dbReference type="NCBI Taxonomy" id="498761"/>
    <lineage>
        <taxon>Bacteria</taxon>
        <taxon>Bacillati</taxon>
        <taxon>Bacillota</taxon>
        <taxon>Clostridia</taxon>
        <taxon>Eubacteriales</taxon>
        <taxon>Heliobacteriaceae</taxon>
        <taxon>Heliomicrobium</taxon>
    </lineage>
</organism>
<feature type="chain" id="PRO_1000126197" description="UPF0178 protein Helmi_09130">
    <location>
        <begin position="1"/>
        <end position="146"/>
    </location>
</feature>
<sequence length="146" mass="16171">MKLLIDADACPREVLRTSLELGRRFQVPVWTVASFNHVIASDRHVVVGGAAQETDIKVMNLAEPGDVAVTQDFGLAAMLIGKGVRCLGPSGRLYDAERIDLLLEERELKARFRRGGGRTKGPKKRTAEEDRRFAGALETLLREWNG</sequence>
<dbReference type="EMBL" id="CP000930">
    <property type="protein sequence ID" value="ABZ83538.1"/>
    <property type="molecule type" value="Genomic_DNA"/>
</dbReference>
<dbReference type="RefSeq" id="WP_012282067.1">
    <property type="nucleotide sequence ID" value="NC_010337.2"/>
</dbReference>
<dbReference type="KEGG" id="hmo:HM1_1036"/>
<dbReference type="eggNOG" id="COG1671">
    <property type="taxonomic scope" value="Bacteria"/>
</dbReference>
<dbReference type="HOGENOM" id="CLU_106619_0_0_9"/>
<dbReference type="OrthoDB" id="9798918at2"/>
<dbReference type="Proteomes" id="UP000008550">
    <property type="component" value="Chromosome"/>
</dbReference>
<dbReference type="HAMAP" id="MF_00489">
    <property type="entry name" value="UPF0178"/>
    <property type="match status" value="1"/>
</dbReference>
<dbReference type="InterPro" id="IPR003791">
    <property type="entry name" value="UPF0178"/>
</dbReference>
<dbReference type="PANTHER" id="PTHR35146">
    <property type="entry name" value="UPF0178 PROTEIN YAII"/>
    <property type="match status" value="1"/>
</dbReference>
<dbReference type="PANTHER" id="PTHR35146:SF1">
    <property type="entry name" value="UPF0178 PROTEIN YAII"/>
    <property type="match status" value="1"/>
</dbReference>
<dbReference type="Pfam" id="PF02639">
    <property type="entry name" value="DUF188"/>
    <property type="match status" value="1"/>
</dbReference>
<name>Y913_HELMI</name>
<accession>B0TIB8</accession>
<proteinExistence type="inferred from homology"/>
<protein>
    <recommendedName>
        <fullName evidence="1">UPF0178 protein Helmi_09130</fullName>
    </recommendedName>
</protein>
<keyword id="KW-1185">Reference proteome</keyword>
<evidence type="ECO:0000255" key="1">
    <source>
        <dbReference type="HAMAP-Rule" id="MF_00489"/>
    </source>
</evidence>
<comment type="similarity">
    <text evidence="1">Belongs to the UPF0178 family.</text>
</comment>